<keyword id="KW-0966">Cell projection</keyword>
<keyword id="KW-0969">Cilium</keyword>
<keyword id="KW-0175">Coiled coil</keyword>
<keyword id="KW-0963">Cytoplasm</keyword>
<keyword id="KW-0206">Cytoskeleton</keyword>
<keyword id="KW-0282">Flagellum</keyword>
<keyword id="KW-0433">Leucine-rich repeat</keyword>
<keyword id="KW-1185">Reference proteome</keyword>
<keyword id="KW-0677">Repeat</keyword>
<evidence type="ECO:0000250" key="1">
    <source>
        <dbReference type="UniProtKB" id="A8IVX2"/>
    </source>
</evidence>
<evidence type="ECO:0000250" key="2">
    <source>
        <dbReference type="UniProtKB" id="Q9D5E4"/>
    </source>
</evidence>
<evidence type="ECO:0000250" key="3">
    <source>
        <dbReference type="UniProtKB" id="Q9H069"/>
    </source>
</evidence>
<evidence type="ECO:0000255" key="4"/>
<evidence type="ECO:0000305" key="5"/>
<proteinExistence type="evidence at transcript level"/>
<comment type="function">
    <text evidence="1">Component of the nexin-dynein regulatory complex (N-DRC) a key regulator of ciliary/flagellar motility which maintains the alignment and integrity of the distal axoneme and regulates microtubule sliding in motile axonemes.</text>
</comment>
<comment type="subunit">
    <text evidence="1 2 3">Component of the nexin-dynein regulatory complex (N-DRC). Interacts with DRC1 (By similarity). Interacts with TCTE1/DRC5 (By similarity). Interacts with DRC7 (By similarity).</text>
</comment>
<comment type="subcellular location">
    <subcellularLocation>
        <location evidence="3">Cytoplasm</location>
        <location evidence="3">Cytoskeleton</location>
        <location evidence="3">Cilium axoneme</location>
    </subcellularLocation>
    <subcellularLocation>
        <location evidence="3">Cell projection</location>
        <location evidence="3">Cilium</location>
    </subcellularLocation>
    <subcellularLocation>
        <location evidence="1">Cytoplasm</location>
        <location evidence="1">Cytoskeleton</location>
        <location evidence="1">Flagellum axoneme</location>
    </subcellularLocation>
    <subcellularLocation>
        <location evidence="2">Cell projection</location>
        <location evidence="2">Cilium</location>
        <location evidence="2">Flagellum</location>
    </subcellularLocation>
</comment>
<comment type="similarity">
    <text evidence="5">Belongs to the DRC3 family.</text>
</comment>
<gene>
    <name type="primary">Drc3</name>
    <name type="synonym">Lrrc48</name>
</gene>
<sequence length="523" mass="60798">MSRPYDSMEPKVMDDDMLKVAVGEQGPQEEAGQLAKQEGILFKDVLALQLDFQNILRIDNLWQFENLRKLQLNNNIIERIEGLENLTHLVWLDLSFNNIEAIEGLDTLVNLEDLSLSHNRISKIDSLDPLVNLQVLSLGNNQINNMMNIIYLRRFPCLRTLSLSGNPVSEAEEYKVFIYAYLPDLVYLDFRRVDEQAREVAKMKHQYSIDELKHREALMQIRLEEEQAKQQKLAEHKMAFVEHLNGPFLFDSMYSDDVEGNKLSYLPGVGELLEAYKDKFVIICLNIFEYGLSQQEKRKIELDTFNECIQEAIQENQDQGKLKIAKFEEKHLLNLNAIREESDLFTMEQKLTECNESITELFNTLMILEMQLVEQLEETINVFERNITDLVGLFIENVQSLIAQCRDLENHHHEKLLEIAINTLEKILKGEMDEDLPDDVRALFVDKDTIVNAVGASHDIHLLKIDNREDELVTGVNSWCAHLVDKIHKDEIMRNRKRVKEINQFVDHMQSELDNLECGDIID</sequence>
<reference key="1">
    <citation type="journal article" date="2004" name="Genome Res.">
        <title>The status, quality, and expansion of the NIH full-length cDNA project: the Mammalian Gene Collection (MGC).</title>
        <authorList>
            <consortium name="The MGC Project Team"/>
        </authorList>
    </citation>
    <scope>NUCLEOTIDE SEQUENCE [LARGE SCALE MRNA]</scope>
    <source>
        <tissue>Testis</tissue>
    </source>
</reference>
<accession>Q5XI54</accession>
<feature type="chain" id="PRO_0000227777" description="Dynein regulatory complex subunit 3">
    <location>
        <begin position="1"/>
        <end position="523"/>
    </location>
</feature>
<feature type="repeat" description="LRR 1">
    <location>
        <begin position="44"/>
        <end position="65"/>
    </location>
</feature>
<feature type="repeat" description="LRR 2">
    <location>
        <begin position="66"/>
        <end position="87"/>
    </location>
</feature>
<feature type="repeat" description="LRR 3">
    <location>
        <begin position="88"/>
        <end position="109"/>
    </location>
</feature>
<feature type="repeat" description="LRR 4">
    <location>
        <begin position="110"/>
        <end position="131"/>
    </location>
</feature>
<feature type="repeat" description="LRR 5">
    <location>
        <begin position="132"/>
        <end position="153"/>
    </location>
</feature>
<feature type="domain" description="LRRCT">
    <location>
        <begin position="166"/>
        <end position="204"/>
    </location>
</feature>
<feature type="coiled-coil region" evidence="4">
    <location>
        <begin position="369"/>
        <end position="393"/>
    </location>
</feature>
<dbReference type="EMBL" id="BC083838">
    <property type="protein sequence ID" value="AAH83838.1"/>
    <property type="molecule type" value="mRNA"/>
</dbReference>
<dbReference type="RefSeq" id="NP_001013879.1">
    <property type="nucleotide sequence ID" value="NM_001013857.1"/>
</dbReference>
<dbReference type="RefSeq" id="XP_006246524.1">
    <property type="nucleotide sequence ID" value="XM_006246462.3"/>
</dbReference>
<dbReference type="RefSeq" id="XP_006246525.1">
    <property type="nucleotide sequence ID" value="XM_006246463.3"/>
</dbReference>
<dbReference type="RefSeq" id="XP_006246526.1">
    <property type="nucleotide sequence ID" value="XM_006246464.3"/>
</dbReference>
<dbReference type="RefSeq" id="XP_006246527.1">
    <property type="nucleotide sequence ID" value="XM_006246465.3"/>
</dbReference>
<dbReference type="RefSeq" id="XP_008766005.1">
    <property type="nucleotide sequence ID" value="XM_008767783.2"/>
</dbReference>
<dbReference type="RefSeq" id="XP_008766006.1">
    <property type="nucleotide sequence ID" value="XM_008767784.2"/>
</dbReference>
<dbReference type="RefSeq" id="XP_063124683.1">
    <property type="nucleotide sequence ID" value="XM_063268613.1"/>
</dbReference>
<dbReference type="RefSeq" id="XP_063124684.1">
    <property type="nucleotide sequence ID" value="XM_063268614.1"/>
</dbReference>
<dbReference type="RefSeq" id="XP_063124685.1">
    <property type="nucleotide sequence ID" value="XM_063268615.1"/>
</dbReference>
<dbReference type="RefSeq" id="XP_063124686.1">
    <property type="nucleotide sequence ID" value="XM_063268616.1"/>
</dbReference>
<dbReference type="RefSeq" id="XP_063124687.1">
    <property type="nucleotide sequence ID" value="XM_063268617.1"/>
</dbReference>
<dbReference type="RefSeq" id="XP_063124688.1">
    <property type="nucleotide sequence ID" value="XM_063268618.1"/>
</dbReference>
<dbReference type="RefSeq" id="XP_063124689.1">
    <property type="nucleotide sequence ID" value="XM_063268619.1"/>
</dbReference>
<dbReference type="SMR" id="Q5XI54"/>
<dbReference type="FunCoup" id="Q5XI54">
    <property type="interactions" value="176"/>
</dbReference>
<dbReference type="STRING" id="10116.ENSRNOP00000038778"/>
<dbReference type="PhosphoSitePlus" id="Q5XI54"/>
<dbReference type="PaxDb" id="10116-ENSRNOP00000038778"/>
<dbReference type="Ensembl" id="ENSRNOT00000032685.5">
    <property type="protein sequence ID" value="ENSRNOP00000038778.4"/>
    <property type="gene ID" value="ENSRNOG00000021303.5"/>
</dbReference>
<dbReference type="GeneID" id="287371"/>
<dbReference type="KEGG" id="rno:287371"/>
<dbReference type="UCSC" id="RGD:1309150">
    <property type="organism name" value="rat"/>
</dbReference>
<dbReference type="AGR" id="RGD:1309150"/>
<dbReference type="CTD" id="83450"/>
<dbReference type="RGD" id="1309150">
    <property type="gene designation" value="Drc3"/>
</dbReference>
<dbReference type="eggNOG" id="KOG0531">
    <property type="taxonomic scope" value="Eukaryota"/>
</dbReference>
<dbReference type="GeneTree" id="ENSGT00940000159298"/>
<dbReference type="HOGENOM" id="CLU_026827_0_0_1"/>
<dbReference type="InParanoid" id="Q5XI54"/>
<dbReference type="OMA" id="SFMEMMT"/>
<dbReference type="OrthoDB" id="46733at9989"/>
<dbReference type="PhylomeDB" id="Q5XI54"/>
<dbReference type="TreeFam" id="TF323974"/>
<dbReference type="PRO" id="PR:Q5XI54"/>
<dbReference type="Proteomes" id="UP000002494">
    <property type="component" value="Chromosome 10"/>
</dbReference>
<dbReference type="Bgee" id="ENSRNOG00000021303">
    <property type="expression patterns" value="Expressed in testis and 19 other cell types or tissues"/>
</dbReference>
<dbReference type="GO" id="GO:0005930">
    <property type="term" value="C:axoneme"/>
    <property type="evidence" value="ECO:0000266"/>
    <property type="project" value="RGD"/>
</dbReference>
<dbReference type="GO" id="GO:0005929">
    <property type="term" value="C:cilium"/>
    <property type="evidence" value="ECO:0000318"/>
    <property type="project" value="GO_Central"/>
</dbReference>
<dbReference type="GO" id="GO:0036126">
    <property type="term" value="C:sperm flagellum"/>
    <property type="evidence" value="ECO:0000250"/>
    <property type="project" value="UniProtKB"/>
</dbReference>
<dbReference type="FunFam" id="3.80.10.10:FF:000292">
    <property type="entry name" value="Dynein regulatory complex subunit 3"/>
    <property type="match status" value="1"/>
</dbReference>
<dbReference type="Gene3D" id="3.80.10.10">
    <property type="entry name" value="Ribonuclease Inhibitor"/>
    <property type="match status" value="1"/>
</dbReference>
<dbReference type="InterPro" id="IPR050576">
    <property type="entry name" value="Cilia_flagella_integrity"/>
</dbReference>
<dbReference type="InterPro" id="IPR001611">
    <property type="entry name" value="Leu-rich_rpt"/>
</dbReference>
<dbReference type="InterPro" id="IPR003591">
    <property type="entry name" value="Leu-rich_rpt_typical-subtyp"/>
</dbReference>
<dbReference type="InterPro" id="IPR032675">
    <property type="entry name" value="LRR_dom_sf"/>
</dbReference>
<dbReference type="PANTHER" id="PTHR45973:SF12">
    <property type="entry name" value="DYNEIN REGULATORY COMPLEX SUBUNIT 3"/>
    <property type="match status" value="1"/>
</dbReference>
<dbReference type="PANTHER" id="PTHR45973">
    <property type="entry name" value="PROTEIN PHOSPHATASE 1 REGULATORY SUBUNIT SDS22-RELATED"/>
    <property type="match status" value="1"/>
</dbReference>
<dbReference type="Pfam" id="PF14580">
    <property type="entry name" value="LRR_9"/>
    <property type="match status" value="1"/>
</dbReference>
<dbReference type="SMART" id="SM00365">
    <property type="entry name" value="LRR_SD22"/>
    <property type="match status" value="4"/>
</dbReference>
<dbReference type="SMART" id="SM00369">
    <property type="entry name" value="LRR_TYP"/>
    <property type="match status" value="3"/>
</dbReference>
<dbReference type="SUPFAM" id="SSF52058">
    <property type="entry name" value="L domain-like"/>
    <property type="match status" value="1"/>
</dbReference>
<dbReference type="PROSITE" id="PS51450">
    <property type="entry name" value="LRR"/>
    <property type="match status" value="5"/>
</dbReference>
<organism>
    <name type="scientific">Rattus norvegicus</name>
    <name type="common">Rat</name>
    <dbReference type="NCBI Taxonomy" id="10116"/>
    <lineage>
        <taxon>Eukaryota</taxon>
        <taxon>Metazoa</taxon>
        <taxon>Chordata</taxon>
        <taxon>Craniata</taxon>
        <taxon>Vertebrata</taxon>
        <taxon>Euteleostomi</taxon>
        <taxon>Mammalia</taxon>
        <taxon>Eutheria</taxon>
        <taxon>Euarchontoglires</taxon>
        <taxon>Glires</taxon>
        <taxon>Rodentia</taxon>
        <taxon>Myomorpha</taxon>
        <taxon>Muroidea</taxon>
        <taxon>Muridae</taxon>
        <taxon>Murinae</taxon>
        <taxon>Rattus</taxon>
    </lineage>
</organism>
<name>DRC3_RAT</name>
<protein>
    <recommendedName>
        <fullName>Dynein regulatory complex subunit 3</fullName>
    </recommendedName>
    <alternativeName>
        <fullName>Leucine-rich repeat-containing protein 48</fullName>
    </alternativeName>
</protein>